<accession>P46787</accession>
<accession>Q9L0C2</accession>
<gene>
    <name evidence="1" type="primary">rplO</name>
    <name type="ordered locus">SCO4721</name>
    <name type="ORF">SCD31.46</name>
</gene>
<dbReference type="EMBL" id="X83011">
    <property type="protein sequence ID" value="CAA58135.1"/>
    <property type="molecule type" value="Genomic_DNA"/>
</dbReference>
<dbReference type="EMBL" id="AL939121">
    <property type="protein sequence ID" value="CAB82089.1"/>
    <property type="molecule type" value="Genomic_DNA"/>
</dbReference>
<dbReference type="PIR" id="S50005">
    <property type="entry name" value="S50005"/>
</dbReference>
<dbReference type="RefSeq" id="NP_628880.1">
    <property type="nucleotide sequence ID" value="NC_003888.3"/>
</dbReference>
<dbReference type="RefSeq" id="WP_003974249.1">
    <property type="nucleotide sequence ID" value="NZ_VNID01000016.1"/>
</dbReference>
<dbReference type="SMR" id="P46787"/>
<dbReference type="FunCoup" id="P46787">
    <property type="interactions" value="325"/>
</dbReference>
<dbReference type="STRING" id="100226.gene:17762370"/>
<dbReference type="PaxDb" id="100226-SCO4721"/>
<dbReference type="GeneID" id="95698779"/>
<dbReference type="KEGG" id="sco:SCO4721"/>
<dbReference type="PATRIC" id="fig|100226.15.peg.4792"/>
<dbReference type="eggNOG" id="COG0200">
    <property type="taxonomic scope" value="Bacteria"/>
</dbReference>
<dbReference type="HOGENOM" id="CLU_055188_4_1_11"/>
<dbReference type="InParanoid" id="P46787"/>
<dbReference type="OrthoDB" id="9810293at2"/>
<dbReference type="PhylomeDB" id="P46787"/>
<dbReference type="Proteomes" id="UP000001973">
    <property type="component" value="Chromosome"/>
</dbReference>
<dbReference type="GO" id="GO:0022625">
    <property type="term" value="C:cytosolic large ribosomal subunit"/>
    <property type="evidence" value="ECO:0000318"/>
    <property type="project" value="GO_Central"/>
</dbReference>
<dbReference type="GO" id="GO:0019843">
    <property type="term" value="F:rRNA binding"/>
    <property type="evidence" value="ECO:0007669"/>
    <property type="project" value="UniProtKB-UniRule"/>
</dbReference>
<dbReference type="GO" id="GO:0003735">
    <property type="term" value="F:structural constituent of ribosome"/>
    <property type="evidence" value="ECO:0000318"/>
    <property type="project" value="GO_Central"/>
</dbReference>
<dbReference type="GO" id="GO:0006412">
    <property type="term" value="P:translation"/>
    <property type="evidence" value="ECO:0007669"/>
    <property type="project" value="UniProtKB-UniRule"/>
</dbReference>
<dbReference type="FunFam" id="3.100.10.10:FF:000005">
    <property type="entry name" value="50S ribosomal protein L15"/>
    <property type="match status" value="1"/>
</dbReference>
<dbReference type="Gene3D" id="3.100.10.10">
    <property type="match status" value="1"/>
</dbReference>
<dbReference type="HAMAP" id="MF_01341">
    <property type="entry name" value="Ribosomal_uL15"/>
    <property type="match status" value="1"/>
</dbReference>
<dbReference type="InterPro" id="IPR030878">
    <property type="entry name" value="Ribosomal_uL15"/>
</dbReference>
<dbReference type="InterPro" id="IPR021131">
    <property type="entry name" value="Ribosomal_uL15/eL18"/>
</dbReference>
<dbReference type="InterPro" id="IPR036227">
    <property type="entry name" value="Ribosomal_uL15/eL18_sf"/>
</dbReference>
<dbReference type="InterPro" id="IPR005749">
    <property type="entry name" value="Ribosomal_uL15_bac-type"/>
</dbReference>
<dbReference type="InterPro" id="IPR001196">
    <property type="entry name" value="Ribosomal_uL15_CS"/>
</dbReference>
<dbReference type="NCBIfam" id="TIGR01071">
    <property type="entry name" value="rplO_bact"/>
    <property type="match status" value="1"/>
</dbReference>
<dbReference type="PANTHER" id="PTHR12934">
    <property type="entry name" value="50S RIBOSOMAL PROTEIN L15"/>
    <property type="match status" value="1"/>
</dbReference>
<dbReference type="PANTHER" id="PTHR12934:SF11">
    <property type="entry name" value="LARGE RIBOSOMAL SUBUNIT PROTEIN UL15M"/>
    <property type="match status" value="1"/>
</dbReference>
<dbReference type="Pfam" id="PF00828">
    <property type="entry name" value="Ribosomal_L27A"/>
    <property type="match status" value="1"/>
</dbReference>
<dbReference type="SUPFAM" id="SSF52080">
    <property type="entry name" value="Ribosomal proteins L15p and L18e"/>
    <property type="match status" value="1"/>
</dbReference>
<dbReference type="PROSITE" id="PS00475">
    <property type="entry name" value="RIBOSOMAL_L15"/>
    <property type="match status" value="1"/>
</dbReference>
<keyword id="KW-1185">Reference proteome</keyword>
<keyword id="KW-0687">Ribonucleoprotein</keyword>
<keyword id="KW-0689">Ribosomal protein</keyword>
<keyword id="KW-0694">RNA-binding</keyword>
<keyword id="KW-0699">rRNA-binding</keyword>
<proteinExistence type="inferred from homology"/>
<organism>
    <name type="scientific">Streptomyces coelicolor (strain ATCC BAA-471 / A3(2) / M145)</name>
    <dbReference type="NCBI Taxonomy" id="100226"/>
    <lineage>
        <taxon>Bacteria</taxon>
        <taxon>Bacillati</taxon>
        <taxon>Actinomycetota</taxon>
        <taxon>Actinomycetes</taxon>
        <taxon>Kitasatosporales</taxon>
        <taxon>Streptomycetaceae</taxon>
        <taxon>Streptomyces</taxon>
        <taxon>Streptomyces albidoflavus group</taxon>
    </lineage>
</organism>
<reference key="1">
    <citation type="submission" date="1994-12" db="EMBL/GenBank/DDBJ databases">
        <authorList>
            <person name="Loriaux A."/>
            <person name="Brans A."/>
            <person name="Dusart J."/>
        </authorList>
    </citation>
    <scope>NUCLEOTIDE SEQUENCE [GENOMIC DNA]</scope>
    <source>
        <strain>A3(2) / NRRL B-16638</strain>
    </source>
</reference>
<reference key="2">
    <citation type="journal article" date="2002" name="Nature">
        <title>Complete genome sequence of the model actinomycete Streptomyces coelicolor A3(2).</title>
        <authorList>
            <person name="Bentley S.D."/>
            <person name="Chater K.F."/>
            <person name="Cerdeno-Tarraga A.-M."/>
            <person name="Challis G.L."/>
            <person name="Thomson N.R."/>
            <person name="James K.D."/>
            <person name="Harris D.E."/>
            <person name="Quail M.A."/>
            <person name="Kieser H."/>
            <person name="Harper D."/>
            <person name="Bateman A."/>
            <person name="Brown S."/>
            <person name="Chandra G."/>
            <person name="Chen C.W."/>
            <person name="Collins M."/>
            <person name="Cronin A."/>
            <person name="Fraser A."/>
            <person name="Goble A."/>
            <person name="Hidalgo J."/>
            <person name="Hornsby T."/>
            <person name="Howarth S."/>
            <person name="Huang C.-H."/>
            <person name="Kieser T."/>
            <person name="Larke L."/>
            <person name="Murphy L.D."/>
            <person name="Oliver K."/>
            <person name="O'Neil S."/>
            <person name="Rabbinowitsch E."/>
            <person name="Rajandream M.A."/>
            <person name="Rutherford K.M."/>
            <person name="Rutter S."/>
            <person name="Seeger K."/>
            <person name="Saunders D."/>
            <person name="Sharp S."/>
            <person name="Squares R."/>
            <person name="Squares S."/>
            <person name="Taylor K."/>
            <person name="Warren T."/>
            <person name="Wietzorrek A."/>
            <person name="Woodward J.R."/>
            <person name="Barrell B.G."/>
            <person name="Parkhill J."/>
            <person name="Hopwood D.A."/>
        </authorList>
    </citation>
    <scope>NUCLEOTIDE SEQUENCE [LARGE SCALE GENOMIC DNA]</scope>
    <source>
        <strain>ATCC BAA-471 / A3(2) / M145</strain>
    </source>
</reference>
<name>RL15_STRCO</name>
<protein>
    <recommendedName>
        <fullName evidence="1">Large ribosomal subunit protein uL15</fullName>
    </recommendedName>
    <alternativeName>
        <fullName evidence="3">50S ribosomal protein L15</fullName>
    </alternativeName>
</protein>
<evidence type="ECO:0000255" key="1">
    <source>
        <dbReference type="HAMAP-Rule" id="MF_01341"/>
    </source>
</evidence>
<evidence type="ECO:0000256" key="2">
    <source>
        <dbReference type="SAM" id="MobiDB-lite"/>
    </source>
</evidence>
<evidence type="ECO:0000305" key="3"/>
<sequence length="151" mass="15948">MAENNPLKIHNLRPAPGAKTAKTRVGRGEASKGKTAGRGTKGTKARYQVPERFEGGQMPLHMRLPKLKGFKNPFKTEFQVVNLDKLAALYPEGGEVTVEGLVAKGAVRKNSLVKVLGQGEISVALQVTVDAVSGSAKEKITAAGGTVTELV</sequence>
<feature type="chain" id="PRO_0000104832" description="Large ribosomal subunit protein uL15">
    <location>
        <begin position="1"/>
        <end position="151"/>
    </location>
</feature>
<feature type="region of interest" description="Disordered" evidence="2">
    <location>
        <begin position="1"/>
        <end position="60"/>
    </location>
</feature>
<feature type="sequence conflict" description="In Ref. 1; CAA58135." evidence="3" ref="1">
    <original>G</original>
    <variation>V</variation>
    <location>
        <position position="145"/>
    </location>
</feature>
<comment type="function">
    <text evidence="1">Binds to the 23S rRNA.</text>
</comment>
<comment type="subunit">
    <text evidence="1">Part of the 50S ribosomal subunit.</text>
</comment>
<comment type="similarity">
    <text evidence="1">Belongs to the universal ribosomal protein uL15 family.</text>
</comment>